<feature type="chain" id="PRO_0000391501" description="RNA-directed RNA polymerase L">
    <location>
        <begin position="1"/>
        <end position="2280"/>
    </location>
</feature>
<feature type="domain" description="RdRp catalytic" evidence="2">
    <location>
        <begin position="638"/>
        <end position="804"/>
    </location>
</feature>
<comment type="function">
    <text evidence="1">Displays RNA-directed RNA polymerase, mRNA guanylyl transferase, mRNA (guanine-N(7)-)-methyltransferase and poly(A) synthetase activities. The viral mRNA guanylyl transferase displays a different biochemical reaction than the cellular enzyme. The template is composed of the viral RNA tightly encapsidated by the nucleoprotein (N). Functions either as transcriptase or as replicase (By similarity).</text>
</comment>
<comment type="catalytic activity">
    <reaction evidence="2">
        <text>RNA(n) + a ribonucleoside 5'-triphosphate = RNA(n+1) + diphosphate</text>
        <dbReference type="Rhea" id="RHEA:21248"/>
        <dbReference type="Rhea" id="RHEA-COMP:14527"/>
        <dbReference type="Rhea" id="RHEA-COMP:17342"/>
        <dbReference type="ChEBI" id="CHEBI:33019"/>
        <dbReference type="ChEBI" id="CHEBI:61557"/>
        <dbReference type="ChEBI" id="CHEBI:140395"/>
        <dbReference type="EC" id="2.7.7.48"/>
    </reaction>
</comment>
<comment type="catalytic activity">
    <reaction>
        <text>a 5'-end (5'-triphosphoguanosine)-ribonucleoside in mRNA + S-adenosyl-L-methionine = a 5'-end (N(7)-methyl 5'-triphosphoguanosine)-ribonucleoside in mRNA + S-adenosyl-L-homocysteine</text>
        <dbReference type="Rhea" id="RHEA:67008"/>
        <dbReference type="Rhea" id="RHEA-COMP:17166"/>
        <dbReference type="Rhea" id="RHEA-COMP:17167"/>
        <dbReference type="ChEBI" id="CHEBI:57856"/>
        <dbReference type="ChEBI" id="CHEBI:59789"/>
        <dbReference type="ChEBI" id="CHEBI:156461"/>
        <dbReference type="ChEBI" id="CHEBI:167617"/>
        <dbReference type="EC" id="2.1.1.56"/>
    </reaction>
</comment>
<accession>Q8BCV9</accession>
<proteinExistence type="inferred from homology"/>
<gene>
    <name type="primary">L</name>
</gene>
<sequence length="2280" mass="262635">MDDFMKEKKINYLKTPYLRTLLESYKEDYVSLKSTIEAEKKKEAREIDVNYPHILTDLIERDRDEVVSLEKIGTPSVISKINSPYTEISEENLNMIKGALYPEKWNRKAHLELLLFREFFLSRLDKESEISYDLSQDGSIELVKRLYNGGYASPESNVVYKFANTLVSHELSKIEMNMLGTQEMKFNEDEISLDSAKKYWVLDVLEHLNKNIMMKASARENKRDAPDSIDFYEGKRIKTNYFGVGSSISRIEFENSLPPLVIFLSSTICGYYFEGEAKCFIGKAEMMNYSMYLADNLLTLSLIRTKLSTEEKKFMDYYVSLLDQPLKTRVGMGALYETTCLLMSDQKTLSSSMPILDNLIESIEVSTEQTEIIVEVCISVGPETCIKMSSLGKTLILASTNPSKGLSKYTQRTNRDNPVNINTIRRLRSLFRQRVIISYIEKHGRVPNLISVPEDLGAQLEMKAAGGNYLGHMISEISRYDSVRLGKFLDTGKEMNLQSRIIDKACTKDSYDSENNSEKEIQYYISNDMKEVFKDPIAIDRDQYKSKERLVKVVHRKEPLMMPMKKYLNVRLSAKEKEQKTAARFYGIASFKLKLWISSTMEMIKRAMKLLPGQMMTMTDDERRLIMFKMSEKLLSKNSYSLFLDYSGHNTSQRPENTNFILEEIANMYGYYEGTPEFNELTSLSYVFSNINIIVEDSWSDYVYISQGQLGAIEGWLGSLWGIQSQLMIEDMFMQLGMNDYIGTTYSDDSCGVFTQSSLDVHKLNGIIKNVQRYGEDMGLIVKLSQTQVTNGRCSMLKEHYYRGKPMDMSIKKMMSISPNGPKLLGDELESATLIDSGYTSSCTRASEIGIQTLLRNFRIVKLLSNSTRKLIEDIDNDILDERYLSSKNNYEISMKIAAKNLSKNRLSSYIPAPRSRVIEFYQFHVTNEKVLDLYLMIMYSPYTLYGYALTPMPDVLISGYSLSNVKRLAYLQGILGKEALIVLSKLINLSGNALSYIDNPFPFVGGRKDTKLLIKPIIVKQLPKRVRNPELLKLLSLQKDKEEINFKTKIVEVFENCFSSRIASKFYECSIYSYISGVISKVDNSTTMKMLLGGRKMMSLINDAWMRNHKLRIRLNDKGIMNYNELLFARNQKVLKYKNDEEIKLNFLEIEEIPIMGKVKYSEYRNMMQPIFKGSTKLTEQGKKNVPPQKTFFNIAKFDRELGVDGMFEHKLIFQAYDLVRYVKWLMMEQERFSKKMNEKDELNLTKLCNMTLHTFTDASYHDLQEHVVCPKGGRYFHRALTSGFNPKTGDLSSNIYSSSYDITGIDQLLAKTGGADNNLNIQYLLIYVRICLSLLRPSPNKLRSLTLTNDIYFNIKDVTFSLENLNDPGSSETLYEVASRDKIQSRGKLYYNYSTYIEMDEDLENKFIDHVSTTRQEFIEKESAFRSVHSYMLDQMIISPELISDLILEGLIGKKMISKGRERFFDQFYKYYKSLNVIGAETPARSVIRGLLYEELFKVNPKSKKGELWSTEIIKHGYSSGFKDSLMKLFILSTSLSYRMLDKQNGKMKLIVNLNRTVQNSKSNFERIRKGECQFYIKDKRITEMILNSFPTLGYTYSDVHQAATDVCCEISDMEFEQVRLGSYYLKLHKAETNKIEGMVYGYVNFSELEINYQDLLDNLGLESALKGFETACSLMVSPEQLSSPTLSAVYPSAKGLLDSLIGNGFIKNSDTIIELCGGRGDFHLAMMEKEIKHTTLSREDGYNLAMRIPGMTSKKVSFNCFRQSDYIPYFDHSIILLDISHITEKKDCLSGILGDCITSKKKVILRLNGLNKFLNYEILQELKMYEMKAYLPVLESPGYVYLTIDASKKLEEEKQLDRKIFTDQLGYSRSILTCSLINSISIVNLQGVISVPPKRVQDQTMEVISDEVLTEMILEEDPEYVHVNPEIKTQVKTADDFKDNLYVYISEKLSIKYKNKLKFLEERLITKGKIEKSENKPKNLIELARKIRRKESDTIEVDYRMLINSKVNIISGVTGMDHNELVEVLNDAMSVKFNKRMSFECWKLILNLSANEKLIDSDLIVETINIQKFRKDVDRTINSSFEIASKAVISFKTGRIVEGLLAVARLDNVRRKSILNHKDKTTRNNILHYKLYMNRIMIISQSMYVEPQFPGISDSKFGKIWRSLGSIESDIDIERANAALDSIESLNKFFKEMNDEYFSFLNNFDLSVDNMTERIKEECQPIDALVDTLTTFGLEVTEEDIARNKELDTWEKVQEYCGEEELFDAWAQEDIGDWGDE</sequence>
<protein>
    <recommendedName>
        <fullName>RNA-directed RNA polymerase L</fullName>
        <shortName>Protein L</shortName>
    </recommendedName>
    <alternativeName>
        <fullName>Large structural protein</fullName>
    </alternativeName>
    <alternativeName>
        <fullName>Replicase</fullName>
    </alternativeName>
    <alternativeName>
        <fullName>Transcriptase</fullName>
    </alternativeName>
    <domain>
        <recommendedName>
            <fullName>RNA-directed RNA polymerase</fullName>
            <ecNumber>2.7.7.48</ecNumber>
        </recommendedName>
    </domain>
    <domain>
        <recommendedName>
            <fullName>mRNA (guanine-N(7))-methyltransferase</fullName>
            <ecNumber>2.1.1.56</ecNumber>
        </recommendedName>
    </domain>
    <domain>
        <recommendedName>
            <fullName>mRNA guanylyltransferase</fullName>
            <ecNumber>2.7.7.-</ecNumber>
        </recommendedName>
    </domain>
</protein>
<reference key="1">
    <citation type="journal article" date="2002" name="J. Gen. Virol.">
        <title>Nucleotide sequence and genomic organization of an ophiovirus associated with lettuce big-vein disease.</title>
        <authorList>
            <person name="Van Der Wilk F."/>
            <person name="Dullemans A.M."/>
            <person name="Verbeek M."/>
            <person name="Van Den Heuvel J.F.J.M."/>
        </authorList>
    </citation>
    <scope>NUCLEOTIDE SEQUENCE [GENOMIC RNA]</scope>
</reference>
<organism>
    <name type="scientific">Mirafiori lettuce virus (isolate Lettuce/Netherlands/LS301-O)</name>
    <name type="common">MiLV</name>
    <name type="synonym">Mirafiori lettuce big-vein virus</name>
    <dbReference type="NCBI Taxonomy" id="652964"/>
    <lineage>
        <taxon>Viruses</taxon>
        <taxon>Riboviria</taxon>
        <taxon>Orthornavirae</taxon>
        <taxon>Negarnaviricota</taxon>
        <taxon>Haploviricotina</taxon>
        <taxon>Milneviricetes</taxon>
        <taxon>Serpentovirales</taxon>
        <taxon>Aspiviridae</taxon>
        <taxon>Ophiovirus</taxon>
        <taxon>Ophiovirus mirafioriense</taxon>
    </lineage>
</organism>
<name>L_MILVL</name>
<keyword id="KW-0067">ATP-binding</keyword>
<keyword id="KW-0489">Methyltransferase</keyword>
<keyword id="KW-0506">mRNA capping</keyword>
<keyword id="KW-0507">mRNA processing</keyword>
<keyword id="KW-0511">Multifunctional enzyme</keyword>
<keyword id="KW-0547">Nucleotide-binding</keyword>
<keyword id="KW-0548">Nucleotidyltransferase</keyword>
<keyword id="KW-0696">RNA-directed RNA polymerase</keyword>
<keyword id="KW-0949">S-adenosyl-L-methionine</keyword>
<keyword id="KW-0808">Transferase</keyword>
<keyword id="KW-0693">Viral RNA replication</keyword>
<evidence type="ECO:0000250" key="1"/>
<evidence type="ECO:0000255" key="2">
    <source>
        <dbReference type="PROSITE-ProRule" id="PRU00539"/>
    </source>
</evidence>
<dbReference type="EC" id="2.7.7.48"/>
<dbReference type="EC" id="2.1.1.56"/>
<dbReference type="EC" id="2.7.7.-"/>
<dbReference type="EMBL" id="AF525933">
    <property type="protein sequence ID" value="AAN60447.1"/>
    <property type="molecule type" value="Genomic_RNA"/>
</dbReference>
<dbReference type="Proteomes" id="UP000887520">
    <property type="component" value="Genome"/>
</dbReference>
<dbReference type="GO" id="GO:0005524">
    <property type="term" value="F:ATP binding"/>
    <property type="evidence" value="ECO:0007669"/>
    <property type="project" value="UniProtKB-KW"/>
</dbReference>
<dbReference type="GO" id="GO:0004482">
    <property type="term" value="F:mRNA 5'-cap (guanine-N7-)-methyltransferase activity"/>
    <property type="evidence" value="ECO:0007669"/>
    <property type="project" value="UniProtKB-EC"/>
</dbReference>
<dbReference type="GO" id="GO:0003968">
    <property type="term" value="F:RNA-directed RNA polymerase activity"/>
    <property type="evidence" value="ECO:0007669"/>
    <property type="project" value="UniProtKB-KW"/>
</dbReference>
<dbReference type="InterPro" id="IPR014023">
    <property type="entry name" value="Mononeg_RNA_pol_cat"/>
</dbReference>
<dbReference type="PROSITE" id="PS50526">
    <property type="entry name" value="RDRP_SSRNA_NEG_NONSEG"/>
    <property type="match status" value="1"/>
</dbReference>
<organismHost>
    <name type="scientific">Lactuca sativa</name>
    <name type="common">Garden lettuce</name>
    <dbReference type="NCBI Taxonomy" id="4236"/>
</organismHost>